<keyword id="KW-0067">ATP-binding</keyword>
<keyword id="KW-0414">Isoprene biosynthesis</keyword>
<keyword id="KW-0418">Kinase</keyword>
<keyword id="KW-0547">Nucleotide-binding</keyword>
<keyword id="KW-0808">Transferase</keyword>
<evidence type="ECO:0000255" key="1">
    <source>
        <dbReference type="HAMAP-Rule" id="MF_00061"/>
    </source>
</evidence>
<dbReference type="EC" id="2.7.1.148" evidence="1"/>
<dbReference type="EMBL" id="CP001001">
    <property type="protein sequence ID" value="ACB27298.1"/>
    <property type="molecule type" value="Genomic_DNA"/>
</dbReference>
<dbReference type="RefSeq" id="WP_012322242.1">
    <property type="nucleotide sequence ID" value="NC_010505.1"/>
</dbReference>
<dbReference type="SMR" id="B1LYB4"/>
<dbReference type="STRING" id="426355.Mrad2831_5351"/>
<dbReference type="GeneID" id="6141423"/>
<dbReference type="KEGG" id="mrd:Mrad2831_5351"/>
<dbReference type="PATRIC" id="fig|426355.14.peg.5405"/>
<dbReference type="eggNOG" id="COG1947">
    <property type="taxonomic scope" value="Bacteria"/>
</dbReference>
<dbReference type="HOGENOM" id="CLU_053057_1_0_5"/>
<dbReference type="OrthoDB" id="9809438at2"/>
<dbReference type="UniPathway" id="UPA00056">
    <property type="reaction ID" value="UER00094"/>
</dbReference>
<dbReference type="Proteomes" id="UP000006589">
    <property type="component" value="Chromosome"/>
</dbReference>
<dbReference type="GO" id="GO:0050515">
    <property type="term" value="F:4-(cytidine 5'-diphospho)-2-C-methyl-D-erythritol kinase activity"/>
    <property type="evidence" value="ECO:0007669"/>
    <property type="project" value="UniProtKB-UniRule"/>
</dbReference>
<dbReference type="GO" id="GO:0005524">
    <property type="term" value="F:ATP binding"/>
    <property type="evidence" value="ECO:0007669"/>
    <property type="project" value="UniProtKB-UniRule"/>
</dbReference>
<dbReference type="GO" id="GO:0019288">
    <property type="term" value="P:isopentenyl diphosphate biosynthetic process, methylerythritol 4-phosphate pathway"/>
    <property type="evidence" value="ECO:0007669"/>
    <property type="project" value="UniProtKB-UniRule"/>
</dbReference>
<dbReference type="GO" id="GO:0016114">
    <property type="term" value="P:terpenoid biosynthetic process"/>
    <property type="evidence" value="ECO:0007669"/>
    <property type="project" value="InterPro"/>
</dbReference>
<dbReference type="Gene3D" id="3.30.230.10">
    <property type="match status" value="1"/>
</dbReference>
<dbReference type="Gene3D" id="3.30.70.890">
    <property type="entry name" value="GHMP kinase, C-terminal domain"/>
    <property type="match status" value="1"/>
</dbReference>
<dbReference type="HAMAP" id="MF_00061">
    <property type="entry name" value="IspE"/>
    <property type="match status" value="1"/>
</dbReference>
<dbReference type="InterPro" id="IPR013750">
    <property type="entry name" value="GHMP_kinase_C_dom"/>
</dbReference>
<dbReference type="InterPro" id="IPR036554">
    <property type="entry name" value="GHMP_kinase_C_sf"/>
</dbReference>
<dbReference type="InterPro" id="IPR006204">
    <property type="entry name" value="GHMP_kinase_N_dom"/>
</dbReference>
<dbReference type="InterPro" id="IPR004424">
    <property type="entry name" value="IspE"/>
</dbReference>
<dbReference type="InterPro" id="IPR020568">
    <property type="entry name" value="Ribosomal_Su5_D2-typ_SF"/>
</dbReference>
<dbReference type="InterPro" id="IPR014721">
    <property type="entry name" value="Ribsml_uS5_D2-typ_fold_subgr"/>
</dbReference>
<dbReference type="NCBIfam" id="NF011202">
    <property type="entry name" value="PRK14608.1"/>
    <property type="match status" value="1"/>
</dbReference>
<dbReference type="PANTHER" id="PTHR43527">
    <property type="entry name" value="4-DIPHOSPHOCYTIDYL-2-C-METHYL-D-ERYTHRITOL KINASE, CHLOROPLASTIC"/>
    <property type="match status" value="1"/>
</dbReference>
<dbReference type="PANTHER" id="PTHR43527:SF2">
    <property type="entry name" value="4-DIPHOSPHOCYTIDYL-2-C-METHYL-D-ERYTHRITOL KINASE, CHLOROPLASTIC"/>
    <property type="match status" value="1"/>
</dbReference>
<dbReference type="Pfam" id="PF08544">
    <property type="entry name" value="GHMP_kinases_C"/>
    <property type="match status" value="1"/>
</dbReference>
<dbReference type="Pfam" id="PF00288">
    <property type="entry name" value="GHMP_kinases_N"/>
    <property type="match status" value="1"/>
</dbReference>
<dbReference type="PIRSF" id="PIRSF010376">
    <property type="entry name" value="IspE"/>
    <property type="match status" value="1"/>
</dbReference>
<dbReference type="SUPFAM" id="SSF55060">
    <property type="entry name" value="GHMP Kinase, C-terminal domain"/>
    <property type="match status" value="1"/>
</dbReference>
<dbReference type="SUPFAM" id="SSF54211">
    <property type="entry name" value="Ribosomal protein S5 domain 2-like"/>
    <property type="match status" value="1"/>
</dbReference>
<feature type="chain" id="PRO_1000092098" description="4-diphosphocytidyl-2-C-methyl-D-erythritol kinase">
    <location>
        <begin position="1"/>
        <end position="290"/>
    </location>
</feature>
<feature type="active site" evidence="1">
    <location>
        <position position="11"/>
    </location>
</feature>
<feature type="active site" evidence="1">
    <location>
        <position position="139"/>
    </location>
</feature>
<feature type="binding site" evidence="1">
    <location>
        <begin position="97"/>
        <end position="107"/>
    </location>
    <ligand>
        <name>ATP</name>
        <dbReference type="ChEBI" id="CHEBI:30616"/>
    </ligand>
</feature>
<name>ISPE_METRJ</name>
<proteinExistence type="inferred from homology"/>
<reference key="1">
    <citation type="submission" date="2008-03" db="EMBL/GenBank/DDBJ databases">
        <title>Complete sequence of chromosome of Methylobacterium radiotolerans JCM 2831.</title>
        <authorList>
            <consortium name="US DOE Joint Genome Institute"/>
            <person name="Copeland A."/>
            <person name="Lucas S."/>
            <person name="Lapidus A."/>
            <person name="Glavina del Rio T."/>
            <person name="Dalin E."/>
            <person name="Tice H."/>
            <person name="Bruce D."/>
            <person name="Goodwin L."/>
            <person name="Pitluck S."/>
            <person name="Kiss H."/>
            <person name="Brettin T."/>
            <person name="Detter J.C."/>
            <person name="Han C."/>
            <person name="Kuske C.R."/>
            <person name="Schmutz J."/>
            <person name="Larimer F."/>
            <person name="Land M."/>
            <person name="Hauser L."/>
            <person name="Kyrpides N."/>
            <person name="Mikhailova N."/>
            <person name="Marx C.J."/>
            <person name="Richardson P."/>
        </authorList>
    </citation>
    <scope>NUCLEOTIDE SEQUENCE [LARGE SCALE GENOMIC DNA]</scope>
    <source>
        <strain>ATCC 27329 / DSM 1819 / JCM 2831 / NBRC 15690 / NCIMB 10815 / 0-1</strain>
    </source>
</reference>
<gene>
    <name evidence="1" type="primary">ispE</name>
    <name type="ordered locus">Mrad2831_5351</name>
</gene>
<protein>
    <recommendedName>
        <fullName evidence="1">4-diphosphocytidyl-2-C-methyl-D-erythritol kinase</fullName>
        <shortName evidence="1">CMK</shortName>
        <ecNumber evidence="1">2.7.1.148</ecNumber>
    </recommendedName>
    <alternativeName>
        <fullName evidence="1">4-(cytidine-5'-diphospho)-2-C-methyl-D-erythritol kinase</fullName>
    </alternativeName>
</protein>
<comment type="function">
    <text evidence="1">Catalyzes the phosphorylation of the position 2 hydroxy group of 4-diphosphocytidyl-2C-methyl-D-erythritol.</text>
</comment>
<comment type="catalytic activity">
    <reaction evidence="1">
        <text>4-CDP-2-C-methyl-D-erythritol + ATP = 4-CDP-2-C-methyl-D-erythritol 2-phosphate + ADP + H(+)</text>
        <dbReference type="Rhea" id="RHEA:18437"/>
        <dbReference type="ChEBI" id="CHEBI:15378"/>
        <dbReference type="ChEBI" id="CHEBI:30616"/>
        <dbReference type="ChEBI" id="CHEBI:57823"/>
        <dbReference type="ChEBI" id="CHEBI:57919"/>
        <dbReference type="ChEBI" id="CHEBI:456216"/>
        <dbReference type="EC" id="2.7.1.148"/>
    </reaction>
</comment>
<comment type="pathway">
    <text evidence="1">Isoprenoid biosynthesis; isopentenyl diphosphate biosynthesis via DXP pathway; isopentenyl diphosphate from 1-deoxy-D-xylulose 5-phosphate: step 3/6.</text>
</comment>
<comment type="similarity">
    <text evidence="1">Belongs to the GHMP kinase family. IspE subfamily.</text>
</comment>
<accession>B1LYB4</accession>
<sequence>MTLLADRAPAKVNLTLHVLGRRVGDGYHVLESLVAFAGTADRLTLDPDAPLGLTVSGPTAGPAGPTDDNLVLRAARGLAARVPGLRAGAFHLVKRLPVAAGIGGGSSDAAAALRLLARLNGLPLDHAAVGAVARETGADVPVCLDPRARMMRGAGEEIGAALGLEPLPAVLINPGVPVPTAPVFRALGLSVGQDLAGAPHPTIPQATATDTLLQALAGARNDLEAPALTVAPVIGDALAALRAQGCRLARMSGSGATVFALFADRRAAVRAAAALRAAHPGWWVAPTFLR</sequence>
<organism>
    <name type="scientific">Methylobacterium radiotolerans (strain ATCC 27329 / DSM 1819 / JCM 2831 / NBRC 15690 / NCIMB 10815 / 0-1)</name>
    <dbReference type="NCBI Taxonomy" id="426355"/>
    <lineage>
        <taxon>Bacteria</taxon>
        <taxon>Pseudomonadati</taxon>
        <taxon>Pseudomonadota</taxon>
        <taxon>Alphaproteobacteria</taxon>
        <taxon>Hyphomicrobiales</taxon>
        <taxon>Methylobacteriaceae</taxon>
        <taxon>Methylobacterium</taxon>
    </lineage>
</organism>